<evidence type="ECO:0000250" key="1"/>
<evidence type="ECO:0000305" key="2"/>
<name>SFGH2_SHIF8</name>
<reference key="1">
    <citation type="journal article" date="2006" name="BMC Genomics">
        <title>Complete genome sequence of Shigella flexneri 5b and comparison with Shigella flexneri 2a.</title>
        <authorList>
            <person name="Nie H."/>
            <person name="Yang F."/>
            <person name="Zhang X."/>
            <person name="Yang J."/>
            <person name="Chen L."/>
            <person name="Wang J."/>
            <person name="Xiong Z."/>
            <person name="Peng J."/>
            <person name="Sun L."/>
            <person name="Dong J."/>
            <person name="Xue Y."/>
            <person name="Xu X."/>
            <person name="Chen S."/>
            <person name="Yao Z."/>
            <person name="Shen Y."/>
            <person name="Jin Q."/>
        </authorList>
    </citation>
    <scope>NUCLEOTIDE SEQUENCE [LARGE SCALE GENOMIC DNA]</scope>
    <source>
        <strain>8401</strain>
    </source>
</reference>
<feature type="chain" id="PRO_0000341677" description="S-formylglutathione hydrolase YeiG">
    <location>
        <begin position="1"/>
        <end position="278"/>
    </location>
</feature>
<feature type="active site" description="Charge relay system" evidence="1">
    <location>
        <position position="145"/>
    </location>
</feature>
<feature type="active site" description="Charge relay system" evidence="1">
    <location>
        <position position="223"/>
    </location>
</feature>
<feature type="active site" description="Charge relay system" evidence="1">
    <location>
        <position position="256"/>
    </location>
</feature>
<organism>
    <name type="scientific">Shigella flexneri serotype 5b (strain 8401)</name>
    <dbReference type="NCBI Taxonomy" id="373384"/>
    <lineage>
        <taxon>Bacteria</taxon>
        <taxon>Pseudomonadati</taxon>
        <taxon>Pseudomonadota</taxon>
        <taxon>Gammaproteobacteria</taxon>
        <taxon>Enterobacterales</taxon>
        <taxon>Enterobacteriaceae</taxon>
        <taxon>Shigella</taxon>
    </lineage>
</organism>
<proteinExistence type="inferred from homology"/>
<gene>
    <name type="primary">yeiG</name>
    <name type="ordered locus">SFV_2229</name>
</gene>
<accession>Q0T2X0</accession>
<sequence>MEMLEEHRCFEGWQQRWRHDSSTLNCPMTFSIFLPPPRDHTPPPVLYWLSGLTCNDENFTTKAGAQRVAAELGIVLVMPDTSPRGEKVANDDGYDLGQGAGFYLNATQPPWATHYRMYDYLRDELPALVQSQFNVSDRCAISGHSMGGHGALIMALKNPGKYTSVSAFAPIVNPCSVPWGIKAFSTYLGEDKNAWLEWDSCALMYASNAQDAIPTLIDQGDNDQFLADQLQPAVLAEAARQKAWPMTLRIQPGYDHSYYFIASFIEDHLRFHAQYLLK</sequence>
<keyword id="KW-0378">Hydrolase</keyword>
<keyword id="KW-0719">Serine esterase</keyword>
<comment type="function">
    <text evidence="1">Serine hydrolase involved in the detoxification of formaldehyde. Hydrolyzes S-formylglutathione to glutathione and formate (By similarity).</text>
</comment>
<comment type="catalytic activity">
    <reaction>
        <text>S-formylglutathione + H2O = formate + glutathione + H(+)</text>
        <dbReference type="Rhea" id="RHEA:14961"/>
        <dbReference type="ChEBI" id="CHEBI:15377"/>
        <dbReference type="ChEBI" id="CHEBI:15378"/>
        <dbReference type="ChEBI" id="CHEBI:15740"/>
        <dbReference type="ChEBI" id="CHEBI:57688"/>
        <dbReference type="ChEBI" id="CHEBI:57925"/>
        <dbReference type="EC" id="3.1.2.12"/>
    </reaction>
</comment>
<comment type="similarity">
    <text evidence="2">Belongs to the esterase D family.</text>
</comment>
<protein>
    <recommendedName>
        <fullName>S-formylglutathione hydrolase YeiG</fullName>
        <shortName>FGH</shortName>
        <ecNumber>3.1.2.12</ecNumber>
    </recommendedName>
</protein>
<dbReference type="EC" id="3.1.2.12"/>
<dbReference type="EMBL" id="CP000266">
    <property type="protein sequence ID" value="ABF04345.1"/>
    <property type="molecule type" value="Genomic_DNA"/>
</dbReference>
<dbReference type="RefSeq" id="WP_000425441.1">
    <property type="nucleotide sequence ID" value="NC_008258.1"/>
</dbReference>
<dbReference type="SMR" id="Q0T2X0"/>
<dbReference type="ESTHER" id="shiss-yeiG">
    <property type="family name" value="A85-EsteraseD-FGH"/>
</dbReference>
<dbReference type="GeneID" id="93775028"/>
<dbReference type="KEGG" id="sfv:SFV_2229"/>
<dbReference type="HOGENOM" id="CLU_056472_0_0_6"/>
<dbReference type="Proteomes" id="UP000000659">
    <property type="component" value="Chromosome"/>
</dbReference>
<dbReference type="GO" id="GO:0005829">
    <property type="term" value="C:cytosol"/>
    <property type="evidence" value="ECO:0007669"/>
    <property type="project" value="TreeGrafter"/>
</dbReference>
<dbReference type="GO" id="GO:0052689">
    <property type="term" value="F:carboxylic ester hydrolase activity"/>
    <property type="evidence" value="ECO:0007669"/>
    <property type="project" value="UniProtKB-KW"/>
</dbReference>
<dbReference type="GO" id="GO:0018738">
    <property type="term" value="F:S-formylglutathione hydrolase activity"/>
    <property type="evidence" value="ECO:0007669"/>
    <property type="project" value="UniProtKB-EC"/>
</dbReference>
<dbReference type="GO" id="GO:0046294">
    <property type="term" value="P:formaldehyde catabolic process"/>
    <property type="evidence" value="ECO:0007669"/>
    <property type="project" value="InterPro"/>
</dbReference>
<dbReference type="FunFam" id="3.40.50.1820:FF:000002">
    <property type="entry name" value="S-formylglutathione hydrolase"/>
    <property type="match status" value="1"/>
</dbReference>
<dbReference type="Gene3D" id="3.40.50.1820">
    <property type="entry name" value="alpha/beta hydrolase"/>
    <property type="match status" value="1"/>
</dbReference>
<dbReference type="InterPro" id="IPR029058">
    <property type="entry name" value="AB_hydrolase_fold"/>
</dbReference>
<dbReference type="InterPro" id="IPR000801">
    <property type="entry name" value="Esterase-like"/>
</dbReference>
<dbReference type="InterPro" id="IPR014186">
    <property type="entry name" value="S-formylglutathione_hydrol"/>
</dbReference>
<dbReference type="NCBIfam" id="TIGR02821">
    <property type="entry name" value="fghA_ester_D"/>
    <property type="match status" value="1"/>
</dbReference>
<dbReference type="PANTHER" id="PTHR10061">
    <property type="entry name" value="S-FORMYLGLUTATHIONE HYDROLASE"/>
    <property type="match status" value="1"/>
</dbReference>
<dbReference type="PANTHER" id="PTHR10061:SF1">
    <property type="entry name" value="S-FORMYLGLUTATHIONE HYDROLASE YEIG"/>
    <property type="match status" value="1"/>
</dbReference>
<dbReference type="Pfam" id="PF00756">
    <property type="entry name" value="Esterase"/>
    <property type="match status" value="1"/>
</dbReference>
<dbReference type="SUPFAM" id="SSF53474">
    <property type="entry name" value="alpha/beta-Hydrolases"/>
    <property type="match status" value="1"/>
</dbReference>